<dbReference type="EC" id="7.3.2.5" evidence="1"/>
<dbReference type="EMBL" id="BA000012">
    <property type="protein sequence ID" value="BAB48831.1"/>
    <property type="molecule type" value="Genomic_DNA"/>
</dbReference>
<dbReference type="RefSeq" id="WP_010910184.1">
    <property type="nucleotide sequence ID" value="NC_002678.2"/>
</dbReference>
<dbReference type="SMR" id="Q98KI3"/>
<dbReference type="KEGG" id="mlo:mll1463"/>
<dbReference type="PATRIC" id="fig|266835.9.peg.1181"/>
<dbReference type="eggNOG" id="COG4148">
    <property type="taxonomic scope" value="Bacteria"/>
</dbReference>
<dbReference type="HOGENOM" id="CLU_000604_1_1_5"/>
<dbReference type="Proteomes" id="UP000000552">
    <property type="component" value="Chromosome"/>
</dbReference>
<dbReference type="GO" id="GO:0005886">
    <property type="term" value="C:plasma membrane"/>
    <property type="evidence" value="ECO:0007669"/>
    <property type="project" value="UniProtKB-SubCell"/>
</dbReference>
<dbReference type="GO" id="GO:0015412">
    <property type="term" value="F:ABC-type molybdate transporter activity"/>
    <property type="evidence" value="ECO:0007669"/>
    <property type="project" value="UniProtKB-EC"/>
</dbReference>
<dbReference type="GO" id="GO:0005524">
    <property type="term" value="F:ATP binding"/>
    <property type="evidence" value="ECO:0007669"/>
    <property type="project" value="UniProtKB-KW"/>
</dbReference>
<dbReference type="GO" id="GO:0016887">
    <property type="term" value="F:ATP hydrolysis activity"/>
    <property type="evidence" value="ECO:0007669"/>
    <property type="project" value="InterPro"/>
</dbReference>
<dbReference type="Gene3D" id="2.40.50.100">
    <property type="match status" value="1"/>
</dbReference>
<dbReference type="Gene3D" id="3.40.50.300">
    <property type="entry name" value="P-loop containing nucleotide triphosphate hydrolases"/>
    <property type="match status" value="1"/>
</dbReference>
<dbReference type="InterPro" id="IPR003593">
    <property type="entry name" value="AAA+_ATPase"/>
</dbReference>
<dbReference type="InterPro" id="IPR003439">
    <property type="entry name" value="ABC_transporter-like_ATP-bd"/>
</dbReference>
<dbReference type="InterPro" id="IPR017871">
    <property type="entry name" value="ABC_transporter-like_CS"/>
</dbReference>
<dbReference type="InterPro" id="IPR008995">
    <property type="entry name" value="Mo/tungstate-bd_C_term_dom"/>
</dbReference>
<dbReference type="InterPro" id="IPR011868">
    <property type="entry name" value="ModC_ABC_ATP-bd"/>
</dbReference>
<dbReference type="InterPro" id="IPR050334">
    <property type="entry name" value="Molybdenum_import_ModC"/>
</dbReference>
<dbReference type="InterPro" id="IPR004606">
    <property type="entry name" value="Mop_domain"/>
</dbReference>
<dbReference type="InterPro" id="IPR027417">
    <property type="entry name" value="P-loop_NTPase"/>
</dbReference>
<dbReference type="InterPro" id="IPR005116">
    <property type="entry name" value="Transp-assoc_OB_typ1"/>
</dbReference>
<dbReference type="NCBIfam" id="TIGR02142">
    <property type="entry name" value="modC_ABC"/>
    <property type="match status" value="1"/>
</dbReference>
<dbReference type="PANTHER" id="PTHR43514">
    <property type="entry name" value="ABC TRANSPORTER I FAMILY MEMBER 10"/>
    <property type="match status" value="1"/>
</dbReference>
<dbReference type="PANTHER" id="PTHR43514:SF4">
    <property type="entry name" value="ABC TRANSPORTER I FAMILY MEMBER 10"/>
    <property type="match status" value="1"/>
</dbReference>
<dbReference type="Pfam" id="PF00005">
    <property type="entry name" value="ABC_tran"/>
    <property type="match status" value="1"/>
</dbReference>
<dbReference type="Pfam" id="PF03459">
    <property type="entry name" value="TOBE"/>
    <property type="match status" value="1"/>
</dbReference>
<dbReference type="SMART" id="SM00382">
    <property type="entry name" value="AAA"/>
    <property type="match status" value="1"/>
</dbReference>
<dbReference type="SUPFAM" id="SSF50331">
    <property type="entry name" value="MOP-like"/>
    <property type="match status" value="1"/>
</dbReference>
<dbReference type="SUPFAM" id="SSF52540">
    <property type="entry name" value="P-loop containing nucleoside triphosphate hydrolases"/>
    <property type="match status" value="1"/>
</dbReference>
<dbReference type="PROSITE" id="PS00211">
    <property type="entry name" value="ABC_TRANSPORTER_1"/>
    <property type="match status" value="1"/>
</dbReference>
<dbReference type="PROSITE" id="PS50893">
    <property type="entry name" value="ABC_TRANSPORTER_2"/>
    <property type="match status" value="1"/>
</dbReference>
<dbReference type="PROSITE" id="PS51241">
    <property type="entry name" value="MODC"/>
    <property type="match status" value="1"/>
</dbReference>
<dbReference type="PROSITE" id="PS51866">
    <property type="entry name" value="MOP"/>
    <property type="match status" value="1"/>
</dbReference>
<organism>
    <name type="scientific">Mesorhizobium japonicum (strain LMG 29417 / CECT 9101 / MAFF 303099)</name>
    <name type="common">Mesorhizobium loti (strain MAFF 303099)</name>
    <dbReference type="NCBI Taxonomy" id="266835"/>
    <lineage>
        <taxon>Bacteria</taxon>
        <taxon>Pseudomonadati</taxon>
        <taxon>Pseudomonadota</taxon>
        <taxon>Alphaproteobacteria</taxon>
        <taxon>Hyphomicrobiales</taxon>
        <taxon>Phyllobacteriaceae</taxon>
        <taxon>Mesorhizobium</taxon>
    </lineage>
</organism>
<sequence length="370" mass="39518">MSVRVDIGHRLGDFAVEARFESAGRLTALFGPSGSGKTTLINMIAGLIRPDKGCIEVEGRVLVDTDAGIFVPKHRRRIGMVFQDARLFPHMSVASNLRYGRWFTPAKERYADMDAVIDLLGIGPLLGRRPAKLSGGEKQRVAIGRALLASPGLLLMDEPLASLDEARKAEILPYIERLRDETKIPIVYVSHSVAEVARLASDVVMLAQGKVVASGPTEAVMQRLDLLPAEERGEGGAVLDTKVLRHDEAFGMTVLGSAAGEIRVPRLAMQTGAPVRVRIRARDVMIATEKPTGLSALNILPGTIVAISPGEGPAVEVGIDCNGATVLARITEQSRQALELRLGGNVFAVVKTVSFDRANTGAGLPLEVDG</sequence>
<evidence type="ECO:0000255" key="1">
    <source>
        <dbReference type="HAMAP-Rule" id="MF_01705"/>
    </source>
</evidence>
<evidence type="ECO:0000255" key="2">
    <source>
        <dbReference type="PROSITE-ProRule" id="PRU01213"/>
    </source>
</evidence>
<protein>
    <recommendedName>
        <fullName evidence="1">Molybdenum import ATP-binding protein ModC</fullName>
        <ecNumber evidence="1">7.3.2.5</ecNumber>
    </recommendedName>
</protein>
<keyword id="KW-0067">ATP-binding</keyword>
<keyword id="KW-0997">Cell inner membrane</keyword>
<keyword id="KW-1003">Cell membrane</keyword>
<keyword id="KW-0472">Membrane</keyword>
<keyword id="KW-0500">Molybdenum</keyword>
<keyword id="KW-0547">Nucleotide-binding</keyword>
<keyword id="KW-1278">Translocase</keyword>
<keyword id="KW-0813">Transport</keyword>
<name>MODC_RHILO</name>
<feature type="chain" id="PRO_0000092551" description="Molybdenum import ATP-binding protein ModC">
    <location>
        <begin position="1"/>
        <end position="370"/>
    </location>
</feature>
<feature type="domain" description="ABC transporter" evidence="1">
    <location>
        <begin position="2"/>
        <end position="233"/>
    </location>
</feature>
<feature type="domain" description="Mop" evidence="2">
    <location>
        <begin position="293"/>
        <end position="359"/>
    </location>
</feature>
<feature type="binding site" evidence="1">
    <location>
        <begin position="31"/>
        <end position="38"/>
    </location>
    <ligand>
        <name>ATP</name>
        <dbReference type="ChEBI" id="CHEBI:30616"/>
    </ligand>
</feature>
<reference key="1">
    <citation type="journal article" date="2000" name="DNA Res.">
        <title>Complete genome structure of the nitrogen-fixing symbiotic bacterium Mesorhizobium loti.</title>
        <authorList>
            <person name="Kaneko T."/>
            <person name="Nakamura Y."/>
            <person name="Sato S."/>
            <person name="Asamizu E."/>
            <person name="Kato T."/>
            <person name="Sasamoto S."/>
            <person name="Watanabe A."/>
            <person name="Idesawa K."/>
            <person name="Ishikawa A."/>
            <person name="Kawashima K."/>
            <person name="Kimura T."/>
            <person name="Kishida Y."/>
            <person name="Kiyokawa C."/>
            <person name="Kohara M."/>
            <person name="Matsumoto M."/>
            <person name="Matsuno A."/>
            <person name="Mochizuki Y."/>
            <person name="Nakayama S."/>
            <person name="Nakazaki N."/>
            <person name="Shimpo S."/>
            <person name="Sugimoto M."/>
            <person name="Takeuchi C."/>
            <person name="Yamada M."/>
            <person name="Tabata S."/>
        </authorList>
    </citation>
    <scope>NUCLEOTIDE SEQUENCE [LARGE SCALE GENOMIC DNA]</scope>
    <source>
        <strain>LMG 29417 / CECT 9101 / MAFF 303099</strain>
    </source>
</reference>
<gene>
    <name evidence="1" type="primary">modC</name>
    <name type="ordered locus">mll1463</name>
</gene>
<accession>Q98KI3</accession>
<comment type="function">
    <text evidence="1">Part of the ABC transporter complex ModABC involved in molybdenum import. Responsible for energy coupling to the transport system.</text>
</comment>
<comment type="catalytic activity">
    <reaction evidence="1">
        <text>molybdate(out) + ATP + H2O = molybdate(in) + ADP + phosphate + H(+)</text>
        <dbReference type="Rhea" id="RHEA:22020"/>
        <dbReference type="ChEBI" id="CHEBI:15377"/>
        <dbReference type="ChEBI" id="CHEBI:15378"/>
        <dbReference type="ChEBI" id="CHEBI:30616"/>
        <dbReference type="ChEBI" id="CHEBI:36264"/>
        <dbReference type="ChEBI" id="CHEBI:43474"/>
        <dbReference type="ChEBI" id="CHEBI:456216"/>
        <dbReference type="EC" id="7.3.2.5"/>
    </reaction>
</comment>
<comment type="subunit">
    <text evidence="1">The complex is composed of two ATP-binding proteins (ModC), two transmembrane proteins (ModB) and a solute-binding protein (ModA).</text>
</comment>
<comment type="subcellular location">
    <subcellularLocation>
        <location evidence="1">Cell inner membrane</location>
        <topology evidence="1">Peripheral membrane protein</topology>
    </subcellularLocation>
</comment>
<comment type="similarity">
    <text evidence="1">Belongs to the ABC transporter superfamily. Molybdate importer (TC 3.A.1.8) family.</text>
</comment>
<proteinExistence type="inferred from homology"/>